<protein>
    <recommendedName>
        <fullName evidence="1">Methionine--tRNA ligase</fullName>
        <ecNumber evidence="1">6.1.1.10</ecNumber>
    </recommendedName>
    <alternativeName>
        <fullName evidence="1">Methionyl-tRNA synthetase</fullName>
        <shortName evidence="1">MetRS</shortName>
    </alternativeName>
</protein>
<keyword id="KW-0030">Aminoacyl-tRNA synthetase</keyword>
<keyword id="KW-0067">ATP-binding</keyword>
<keyword id="KW-0963">Cytoplasm</keyword>
<keyword id="KW-0436">Ligase</keyword>
<keyword id="KW-0479">Metal-binding</keyword>
<keyword id="KW-0547">Nucleotide-binding</keyword>
<keyword id="KW-0648">Protein biosynthesis</keyword>
<keyword id="KW-1185">Reference proteome</keyword>
<keyword id="KW-0694">RNA-binding</keyword>
<keyword id="KW-0820">tRNA-binding</keyword>
<keyword id="KW-0862">Zinc</keyword>
<reference key="1">
    <citation type="submission" date="2006-10" db="EMBL/GenBank/DDBJ databases">
        <title>Complete sequence of Methanosaeta thermophila PT.</title>
        <authorList>
            <consortium name="US DOE Joint Genome Institute"/>
            <person name="Copeland A."/>
            <person name="Lucas S."/>
            <person name="Lapidus A."/>
            <person name="Barry K."/>
            <person name="Detter J.C."/>
            <person name="Glavina del Rio T."/>
            <person name="Hammon N."/>
            <person name="Israni S."/>
            <person name="Pitluck S."/>
            <person name="Chain P."/>
            <person name="Malfatti S."/>
            <person name="Shin M."/>
            <person name="Vergez L."/>
            <person name="Schmutz J."/>
            <person name="Larimer F."/>
            <person name="Land M."/>
            <person name="Hauser L."/>
            <person name="Kyrpides N."/>
            <person name="Kim E."/>
            <person name="Smith K.S."/>
            <person name="Ingram-Smith C."/>
            <person name="Richardson P."/>
        </authorList>
    </citation>
    <scope>NUCLEOTIDE SEQUENCE [LARGE SCALE GENOMIC DNA]</scope>
    <source>
        <strain>DSM 6194 / JCM 14653 / NBRC 101360 / PT</strain>
    </source>
</reference>
<evidence type="ECO:0000255" key="1">
    <source>
        <dbReference type="HAMAP-Rule" id="MF_00098"/>
    </source>
</evidence>
<gene>
    <name evidence="1" type="primary">metG</name>
    <name type="ordered locus">Mthe_0888</name>
</gene>
<proteinExistence type="inferred from homology"/>
<accession>A0B7K2</accession>
<sequence length="669" mass="76253">MPTDNDPILVTCGLPYANGPAHIGHLRTYVPADIFVRALRRMGHDVLFICGSDAHGTPIVVNAESRGMSPRELVEFYHKHFEDVFRSINVRFDYFGCTDDPSNHHRTQEIVRALMERGHVYPKEIELAYCPRCERFLPDRYVEGICPYCGVPARGDECDQGCGRHLEPGEIKDAVCKVCGTRAEYRKQTHYFFRLSAFREFLLDYLQRLGGTASARNYALEWVRQELKDWCITRNMSWGVKFPGSEDLVVYVWVDAPIGYISFTEEWCKAHGVPWERYWRGKSRIIHFIGGDIVYHHCIFWPAMLEGAGYTLPSDVVASGMLKIDDKKFSKSRGYVVWVKDDYLDQGLEPDYLRYYLASYTSHTKEVNFSWKILQEKVNTELVGAFGNFLNRAVTFAVKNFDGKVPEGELDPEVMKRIEMSVGDVSSSLMEYEFKRASDAVLSLADYANTYFQSHEPWKLIRSDRRAAGSVLRNCLQMVKAMIILMEPFMPSRMAVAWKQLGMESLDDIQFRDAVQPIPEGHPLGTPKILFSRIEDSTVKRLEEIFRERVRRAEGAGEKVKEKPVIPFDQFKALDLRVGTVLEAERIKGSDKLLRLIVDIGEKRQIVAGIAKMYKPEELVGRQVVVVANLEPVKIFGVESRGMLLAADINGDAVLLKPDKEVPAGCGIR</sequence>
<dbReference type="EC" id="6.1.1.10" evidence="1"/>
<dbReference type="EMBL" id="CP000477">
    <property type="protein sequence ID" value="ABK14676.1"/>
    <property type="molecule type" value="Genomic_DNA"/>
</dbReference>
<dbReference type="RefSeq" id="WP_011696071.1">
    <property type="nucleotide sequence ID" value="NC_008553.1"/>
</dbReference>
<dbReference type="SMR" id="A0B7K2"/>
<dbReference type="STRING" id="349307.Mthe_0888"/>
<dbReference type="GeneID" id="4461845"/>
<dbReference type="KEGG" id="mtp:Mthe_0888"/>
<dbReference type="HOGENOM" id="CLU_009710_1_2_2"/>
<dbReference type="OrthoDB" id="371856at2157"/>
<dbReference type="Proteomes" id="UP000000674">
    <property type="component" value="Chromosome"/>
</dbReference>
<dbReference type="GO" id="GO:0017101">
    <property type="term" value="C:aminoacyl-tRNA synthetase multienzyme complex"/>
    <property type="evidence" value="ECO:0007669"/>
    <property type="project" value="TreeGrafter"/>
</dbReference>
<dbReference type="GO" id="GO:0005829">
    <property type="term" value="C:cytosol"/>
    <property type="evidence" value="ECO:0007669"/>
    <property type="project" value="TreeGrafter"/>
</dbReference>
<dbReference type="GO" id="GO:0005524">
    <property type="term" value="F:ATP binding"/>
    <property type="evidence" value="ECO:0007669"/>
    <property type="project" value="UniProtKB-UniRule"/>
</dbReference>
<dbReference type="GO" id="GO:0046872">
    <property type="term" value="F:metal ion binding"/>
    <property type="evidence" value="ECO:0007669"/>
    <property type="project" value="UniProtKB-KW"/>
</dbReference>
<dbReference type="GO" id="GO:0004825">
    <property type="term" value="F:methionine-tRNA ligase activity"/>
    <property type="evidence" value="ECO:0007669"/>
    <property type="project" value="UniProtKB-UniRule"/>
</dbReference>
<dbReference type="GO" id="GO:0000049">
    <property type="term" value="F:tRNA binding"/>
    <property type="evidence" value="ECO:0007669"/>
    <property type="project" value="UniProtKB-KW"/>
</dbReference>
<dbReference type="GO" id="GO:0006431">
    <property type="term" value="P:methionyl-tRNA aminoacylation"/>
    <property type="evidence" value="ECO:0007669"/>
    <property type="project" value="UniProtKB-UniRule"/>
</dbReference>
<dbReference type="CDD" id="cd07957">
    <property type="entry name" value="Anticodon_Ia_Met"/>
    <property type="match status" value="1"/>
</dbReference>
<dbReference type="CDD" id="cd00814">
    <property type="entry name" value="MetRS_core"/>
    <property type="match status" value="1"/>
</dbReference>
<dbReference type="CDD" id="cd02800">
    <property type="entry name" value="tRNA_bind_EcMetRS_like"/>
    <property type="match status" value="1"/>
</dbReference>
<dbReference type="FunFam" id="2.40.50.140:FF:000042">
    <property type="entry name" value="Methionine--tRNA ligase"/>
    <property type="match status" value="1"/>
</dbReference>
<dbReference type="Gene3D" id="3.40.50.620">
    <property type="entry name" value="HUPs"/>
    <property type="match status" value="1"/>
</dbReference>
<dbReference type="Gene3D" id="1.10.730.10">
    <property type="entry name" value="Isoleucyl-tRNA Synthetase, Domain 1"/>
    <property type="match status" value="1"/>
</dbReference>
<dbReference type="Gene3D" id="2.20.28.20">
    <property type="entry name" value="Methionyl-tRNA synthetase, Zn-domain"/>
    <property type="match status" value="1"/>
</dbReference>
<dbReference type="Gene3D" id="2.40.50.140">
    <property type="entry name" value="Nucleic acid-binding proteins"/>
    <property type="match status" value="1"/>
</dbReference>
<dbReference type="HAMAP" id="MF_00098">
    <property type="entry name" value="Met_tRNA_synth_type1"/>
    <property type="match status" value="1"/>
</dbReference>
<dbReference type="InterPro" id="IPR041872">
    <property type="entry name" value="Anticodon_Met"/>
</dbReference>
<dbReference type="InterPro" id="IPR004495">
    <property type="entry name" value="Met-tRNA-synth_bsu_C"/>
</dbReference>
<dbReference type="InterPro" id="IPR023458">
    <property type="entry name" value="Met-tRNA_ligase_1"/>
</dbReference>
<dbReference type="InterPro" id="IPR014758">
    <property type="entry name" value="Met-tRNA_synth"/>
</dbReference>
<dbReference type="InterPro" id="IPR015413">
    <property type="entry name" value="Methionyl/Leucyl_tRNA_Synth"/>
</dbReference>
<dbReference type="InterPro" id="IPR033911">
    <property type="entry name" value="MetRS_core"/>
</dbReference>
<dbReference type="InterPro" id="IPR029038">
    <property type="entry name" value="MetRS_Zn"/>
</dbReference>
<dbReference type="InterPro" id="IPR012340">
    <property type="entry name" value="NA-bd_OB-fold"/>
</dbReference>
<dbReference type="InterPro" id="IPR014729">
    <property type="entry name" value="Rossmann-like_a/b/a_fold"/>
</dbReference>
<dbReference type="InterPro" id="IPR002547">
    <property type="entry name" value="tRNA-bd_dom"/>
</dbReference>
<dbReference type="InterPro" id="IPR009080">
    <property type="entry name" value="tRNAsynth_Ia_anticodon-bd"/>
</dbReference>
<dbReference type="NCBIfam" id="TIGR00398">
    <property type="entry name" value="metG"/>
    <property type="match status" value="1"/>
</dbReference>
<dbReference type="NCBIfam" id="TIGR00399">
    <property type="entry name" value="metG_C_term"/>
    <property type="match status" value="1"/>
</dbReference>
<dbReference type="NCBIfam" id="NF001100">
    <property type="entry name" value="PRK00133.1"/>
    <property type="match status" value="1"/>
</dbReference>
<dbReference type="PANTHER" id="PTHR45765">
    <property type="entry name" value="METHIONINE--TRNA LIGASE"/>
    <property type="match status" value="1"/>
</dbReference>
<dbReference type="PANTHER" id="PTHR45765:SF1">
    <property type="entry name" value="METHIONINE--TRNA LIGASE, CYTOPLASMIC"/>
    <property type="match status" value="1"/>
</dbReference>
<dbReference type="Pfam" id="PF19303">
    <property type="entry name" value="Anticodon_3"/>
    <property type="match status" value="1"/>
</dbReference>
<dbReference type="Pfam" id="PF09334">
    <property type="entry name" value="tRNA-synt_1g"/>
    <property type="match status" value="1"/>
</dbReference>
<dbReference type="Pfam" id="PF01588">
    <property type="entry name" value="tRNA_bind"/>
    <property type="match status" value="1"/>
</dbReference>
<dbReference type="PRINTS" id="PR01041">
    <property type="entry name" value="TRNASYNTHMET"/>
</dbReference>
<dbReference type="SUPFAM" id="SSF47323">
    <property type="entry name" value="Anticodon-binding domain of a subclass of class I aminoacyl-tRNA synthetases"/>
    <property type="match status" value="1"/>
</dbReference>
<dbReference type="SUPFAM" id="SSF57770">
    <property type="entry name" value="Methionyl-tRNA synthetase (MetRS), Zn-domain"/>
    <property type="match status" value="1"/>
</dbReference>
<dbReference type="SUPFAM" id="SSF50249">
    <property type="entry name" value="Nucleic acid-binding proteins"/>
    <property type="match status" value="1"/>
</dbReference>
<dbReference type="SUPFAM" id="SSF52374">
    <property type="entry name" value="Nucleotidylyl transferase"/>
    <property type="match status" value="1"/>
</dbReference>
<dbReference type="PROSITE" id="PS50886">
    <property type="entry name" value="TRBD"/>
    <property type="match status" value="1"/>
</dbReference>
<feature type="chain" id="PRO_0000331948" description="Methionine--tRNA ligase">
    <location>
        <begin position="1"/>
        <end position="669"/>
    </location>
</feature>
<feature type="domain" description="tRNA-binding" evidence="1">
    <location>
        <begin position="570"/>
        <end position="669"/>
    </location>
</feature>
<feature type="short sequence motif" description="'HIGH' region">
    <location>
        <begin position="15"/>
        <end position="25"/>
    </location>
</feature>
<feature type="short sequence motif" description="'KMSKS' region">
    <location>
        <begin position="328"/>
        <end position="332"/>
    </location>
</feature>
<feature type="binding site" evidence="1">
    <location>
        <position position="146"/>
    </location>
    <ligand>
        <name>Zn(2+)</name>
        <dbReference type="ChEBI" id="CHEBI:29105"/>
    </ligand>
</feature>
<feature type="binding site" evidence="1">
    <location>
        <position position="149"/>
    </location>
    <ligand>
        <name>Zn(2+)</name>
        <dbReference type="ChEBI" id="CHEBI:29105"/>
    </ligand>
</feature>
<feature type="binding site" evidence="1">
    <location>
        <position position="158"/>
    </location>
    <ligand>
        <name>Zn(2+)</name>
        <dbReference type="ChEBI" id="CHEBI:29105"/>
    </ligand>
</feature>
<feature type="binding site" evidence="1">
    <location>
        <position position="162"/>
    </location>
    <ligand>
        <name>Zn(2+)</name>
        <dbReference type="ChEBI" id="CHEBI:29105"/>
    </ligand>
</feature>
<feature type="binding site" evidence="1">
    <location>
        <position position="331"/>
    </location>
    <ligand>
        <name>ATP</name>
        <dbReference type="ChEBI" id="CHEBI:30616"/>
    </ligand>
</feature>
<comment type="function">
    <text evidence="1">Is required not only for elongation of protein synthesis but also for the initiation of all mRNA translation through initiator tRNA(fMet) aminoacylation.</text>
</comment>
<comment type="catalytic activity">
    <reaction evidence="1">
        <text>tRNA(Met) + L-methionine + ATP = L-methionyl-tRNA(Met) + AMP + diphosphate</text>
        <dbReference type="Rhea" id="RHEA:13481"/>
        <dbReference type="Rhea" id="RHEA-COMP:9667"/>
        <dbReference type="Rhea" id="RHEA-COMP:9698"/>
        <dbReference type="ChEBI" id="CHEBI:30616"/>
        <dbReference type="ChEBI" id="CHEBI:33019"/>
        <dbReference type="ChEBI" id="CHEBI:57844"/>
        <dbReference type="ChEBI" id="CHEBI:78442"/>
        <dbReference type="ChEBI" id="CHEBI:78530"/>
        <dbReference type="ChEBI" id="CHEBI:456215"/>
        <dbReference type="EC" id="6.1.1.10"/>
    </reaction>
</comment>
<comment type="cofactor">
    <cofactor evidence="1">
        <name>Zn(2+)</name>
        <dbReference type="ChEBI" id="CHEBI:29105"/>
    </cofactor>
    <text evidence="1">Binds 1 zinc ion per subunit.</text>
</comment>
<comment type="subunit">
    <text evidence="1">Homodimer.</text>
</comment>
<comment type="subcellular location">
    <subcellularLocation>
        <location evidence="1">Cytoplasm</location>
    </subcellularLocation>
</comment>
<comment type="similarity">
    <text evidence="1">Belongs to the class-I aminoacyl-tRNA synthetase family. MetG type 1 subfamily.</text>
</comment>
<name>SYM_METTP</name>
<organism>
    <name type="scientific">Methanothrix thermoacetophila (strain DSM 6194 / JCM 14653 / NBRC 101360 / PT)</name>
    <name type="common">Methanosaeta thermophila</name>
    <dbReference type="NCBI Taxonomy" id="349307"/>
    <lineage>
        <taxon>Archaea</taxon>
        <taxon>Methanobacteriati</taxon>
        <taxon>Methanobacteriota</taxon>
        <taxon>Stenosarchaea group</taxon>
        <taxon>Methanomicrobia</taxon>
        <taxon>Methanotrichales</taxon>
        <taxon>Methanotrichaceae</taxon>
        <taxon>Methanothrix</taxon>
    </lineage>
</organism>